<sequence>MAPKKDKAPPPSSKPAKSGGKQKKKKWSKGKQKEKVNNLVLFDNATFDKLLSEAGKQKVVTAATLSERFRINGSLARRAIRELVSRGAIKMVCHHSSLQIYTRSTNEKVNPTAA</sequence>
<comment type="similarity">
    <text evidence="2">Belongs to the eukaryotic ribosomal protein eS25 family.</text>
</comment>
<protein>
    <recommendedName>
        <fullName evidence="2">Small ribosomal subunit protein eS25</fullName>
    </recommendedName>
    <alternativeName>
        <fullName>40S ribosomal protein S25</fullName>
    </alternativeName>
</protein>
<feature type="chain" id="PRO_0000192881" description="Small ribosomal subunit protein eS25">
    <location>
        <begin position="1"/>
        <end position="114"/>
    </location>
</feature>
<feature type="region of interest" description="Disordered" evidence="1">
    <location>
        <begin position="1"/>
        <end position="33"/>
    </location>
</feature>
<feature type="compositionally biased region" description="Basic residues" evidence="1">
    <location>
        <begin position="20"/>
        <end position="30"/>
    </location>
</feature>
<proteinExistence type="inferred from homology"/>
<organism>
    <name type="scientific">Amaranthus cruentus</name>
    <name type="common">Purple amaranth</name>
    <name type="synonym">Amaranthus paniculatus</name>
    <dbReference type="NCBI Taxonomy" id="117272"/>
    <lineage>
        <taxon>Eukaryota</taxon>
        <taxon>Viridiplantae</taxon>
        <taxon>Streptophyta</taxon>
        <taxon>Embryophyta</taxon>
        <taxon>Tracheophyta</taxon>
        <taxon>Spermatophyta</taxon>
        <taxon>Magnoliopsida</taxon>
        <taxon>eudicotyledons</taxon>
        <taxon>Gunneridae</taxon>
        <taxon>Pentapetalae</taxon>
        <taxon>Caryophyllales</taxon>
        <taxon>Amaranthaceae</taxon>
        <taxon>Amaranthus</taxon>
    </lineage>
</organism>
<keyword id="KW-0687">Ribonucleoprotein</keyword>
<keyword id="KW-0689">Ribosomal protein</keyword>
<dbReference type="EMBL" id="AF268028">
    <property type="protein sequence ID" value="AAK58369.1"/>
    <property type="molecule type" value="mRNA"/>
</dbReference>
<dbReference type="SMR" id="Q94G66"/>
<dbReference type="GO" id="GO:1990904">
    <property type="term" value="C:ribonucleoprotein complex"/>
    <property type="evidence" value="ECO:0007669"/>
    <property type="project" value="UniProtKB-KW"/>
</dbReference>
<dbReference type="GO" id="GO:0005840">
    <property type="term" value="C:ribosome"/>
    <property type="evidence" value="ECO:0007669"/>
    <property type="project" value="UniProtKB-KW"/>
</dbReference>
<dbReference type="FunFam" id="3.30.63.20:FF:000001">
    <property type="entry name" value="40S ribosomal protein S25"/>
    <property type="match status" value="1"/>
</dbReference>
<dbReference type="Gene3D" id="3.30.63.20">
    <property type="match status" value="1"/>
</dbReference>
<dbReference type="InterPro" id="IPR004977">
    <property type="entry name" value="Ribosomal_eS25"/>
</dbReference>
<dbReference type="PANTHER" id="PTHR12850">
    <property type="entry name" value="40S RIBOSOMAL PROTEIN S25"/>
    <property type="match status" value="1"/>
</dbReference>
<dbReference type="Pfam" id="PF03297">
    <property type="entry name" value="Ribosomal_S25"/>
    <property type="match status" value="1"/>
</dbReference>
<accession>Q94G66</accession>
<gene>
    <name type="primary">RPS25</name>
</gene>
<name>RS25_AMACR</name>
<reference key="1">
    <citation type="submission" date="2000-05" db="EMBL/GenBank/DDBJ databases">
        <title>Cloning a cDNA encoding amaranth ribosomal protein S25.</title>
        <authorList>
            <person name="Xu F.-X."/>
            <person name="Sun M."/>
        </authorList>
    </citation>
    <scope>NUCLEOTIDE SEQUENCE [MRNA]</scope>
</reference>
<evidence type="ECO:0000256" key="1">
    <source>
        <dbReference type="SAM" id="MobiDB-lite"/>
    </source>
</evidence>
<evidence type="ECO:0000305" key="2"/>